<proteinExistence type="inferred from homology"/>
<protein>
    <recommendedName>
        <fullName evidence="1">Small ribosomal subunit protein uS3</fullName>
    </recommendedName>
    <alternativeName>
        <fullName evidence="2">30S ribosomal protein S3</fullName>
    </alternativeName>
</protein>
<accession>Q034Y9</accession>
<sequence>MGQKINPTGFRVGVIRDWDAKWYADKDFAAFLHEDIEIRNFINKKLQDASVSRIEIERAAKRVNISIHTAKPGMVIGKGGSEVENLRKQLNKLTGRQVHINIVEIKKPDLDAKLVGENIARQLEQRIAFRRAMRQAMQRTMRAGAKGIKTQASGRLNGADIARREHYNEGLVPLHTLRADIDYAWEEAATTYGRIGIKTWINRGEILPEKPKQNSVKGGK</sequence>
<keyword id="KW-1185">Reference proteome</keyword>
<keyword id="KW-0687">Ribonucleoprotein</keyword>
<keyword id="KW-0689">Ribosomal protein</keyword>
<keyword id="KW-0694">RNA-binding</keyword>
<keyword id="KW-0699">rRNA-binding</keyword>
<gene>
    <name evidence="1" type="primary">rpsC</name>
    <name type="ordered locus">LSEI_2497</name>
</gene>
<dbReference type="EMBL" id="CP000423">
    <property type="protein sequence ID" value="ABJ71233.1"/>
    <property type="molecule type" value="Genomic_DNA"/>
</dbReference>
<dbReference type="RefSeq" id="WP_003571453.1">
    <property type="nucleotide sequence ID" value="NC_008526.1"/>
</dbReference>
<dbReference type="RefSeq" id="YP_807675.1">
    <property type="nucleotide sequence ID" value="NC_008526.1"/>
</dbReference>
<dbReference type="SMR" id="Q034Y9"/>
<dbReference type="STRING" id="321967.LSEI_2497"/>
<dbReference type="PaxDb" id="321967-LSEI_2497"/>
<dbReference type="GeneID" id="57091076"/>
<dbReference type="KEGG" id="lca:LSEI_2497"/>
<dbReference type="PATRIC" id="fig|321967.11.peg.2451"/>
<dbReference type="HOGENOM" id="CLU_058591_0_2_9"/>
<dbReference type="Proteomes" id="UP000001651">
    <property type="component" value="Chromosome"/>
</dbReference>
<dbReference type="GO" id="GO:0022627">
    <property type="term" value="C:cytosolic small ribosomal subunit"/>
    <property type="evidence" value="ECO:0007669"/>
    <property type="project" value="TreeGrafter"/>
</dbReference>
<dbReference type="GO" id="GO:0003729">
    <property type="term" value="F:mRNA binding"/>
    <property type="evidence" value="ECO:0007669"/>
    <property type="project" value="UniProtKB-UniRule"/>
</dbReference>
<dbReference type="GO" id="GO:0019843">
    <property type="term" value="F:rRNA binding"/>
    <property type="evidence" value="ECO:0007669"/>
    <property type="project" value="UniProtKB-UniRule"/>
</dbReference>
<dbReference type="GO" id="GO:0003735">
    <property type="term" value="F:structural constituent of ribosome"/>
    <property type="evidence" value="ECO:0007669"/>
    <property type="project" value="InterPro"/>
</dbReference>
<dbReference type="GO" id="GO:0006412">
    <property type="term" value="P:translation"/>
    <property type="evidence" value="ECO:0007669"/>
    <property type="project" value="UniProtKB-UniRule"/>
</dbReference>
<dbReference type="CDD" id="cd02412">
    <property type="entry name" value="KH-II_30S_S3"/>
    <property type="match status" value="1"/>
</dbReference>
<dbReference type="FunFam" id="3.30.300.20:FF:000001">
    <property type="entry name" value="30S ribosomal protein S3"/>
    <property type="match status" value="1"/>
</dbReference>
<dbReference type="Gene3D" id="3.30.300.20">
    <property type="match status" value="1"/>
</dbReference>
<dbReference type="Gene3D" id="3.30.1140.32">
    <property type="entry name" value="Ribosomal protein S3, C-terminal domain"/>
    <property type="match status" value="1"/>
</dbReference>
<dbReference type="HAMAP" id="MF_01309_B">
    <property type="entry name" value="Ribosomal_uS3_B"/>
    <property type="match status" value="1"/>
</dbReference>
<dbReference type="InterPro" id="IPR004087">
    <property type="entry name" value="KH_dom"/>
</dbReference>
<dbReference type="InterPro" id="IPR015946">
    <property type="entry name" value="KH_dom-like_a/b"/>
</dbReference>
<dbReference type="InterPro" id="IPR004044">
    <property type="entry name" value="KH_dom_type_2"/>
</dbReference>
<dbReference type="InterPro" id="IPR009019">
    <property type="entry name" value="KH_sf_prok-type"/>
</dbReference>
<dbReference type="InterPro" id="IPR036419">
    <property type="entry name" value="Ribosomal_S3_C_sf"/>
</dbReference>
<dbReference type="InterPro" id="IPR005704">
    <property type="entry name" value="Ribosomal_uS3_bac-typ"/>
</dbReference>
<dbReference type="InterPro" id="IPR001351">
    <property type="entry name" value="Ribosomal_uS3_C"/>
</dbReference>
<dbReference type="InterPro" id="IPR018280">
    <property type="entry name" value="Ribosomal_uS3_CS"/>
</dbReference>
<dbReference type="NCBIfam" id="TIGR01009">
    <property type="entry name" value="rpsC_bact"/>
    <property type="match status" value="1"/>
</dbReference>
<dbReference type="PANTHER" id="PTHR11760">
    <property type="entry name" value="30S/40S RIBOSOMAL PROTEIN S3"/>
    <property type="match status" value="1"/>
</dbReference>
<dbReference type="PANTHER" id="PTHR11760:SF19">
    <property type="entry name" value="SMALL RIBOSOMAL SUBUNIT PROTEIN US3C"/>
    <property type="match status" value="1"/>
</dbReference>
<dbReference type="Pfam" id="PF07650">
    <property type="entry name" value="KH_2"/>
    <property type="match status" value="1"/>
</dbReference>
<dbReference type="Pfam" id="PF00189">
    <property type="entry name" value="Ribosomal_S3_C"/>
    <property type="match status" value="1"/>
</dbReference>
<dbReference type="SMART" id="SM00322">
    <property type="entry name" value="KH"/>
    <property type="match status" value="1"/>
</dbReference>
<dbReference type="SUPFAM" id="SSF54814">
    <property type="entry name" value="Prokaryotic type KH domain (KH-domain type II)"/>
    <property type="match status" value="1"/>
</dbReference>
<dbReference type="SUPFAM" id="SSF54821">
    <property type="entry name" value="Ribosomal protein S3 C-terminal domain"/>
    <property type="match status" value="1"/>
</dbReference>
<dbReference type="PROSITE" id="PS50823">
    <property type="entry name" value="KH_TYPE_2"/>
    <property type="match status" value="1"/>
</dbReference>
<dbReference type="PROSITE" id="PS00548">
    <property type="entry name" value="RIBOSOMAL_S3"/>
    <property type="match status" value="1"/>
</dbReference>
<comment type="function">
    <text evidence="1">Binds the lower part of the 30S subunit head. Binds mRNA in the 70S ribosome, positioning it for translation.</text>
</comment>
<comment type="subunit">
    <text evidence="1">Part of the 30S ribosomal subunit. Forms a tight complex with proteins S10 and S14.</text>
</comment>
<comment type="similarity">
    <text evidence="1">Belongs to the universal ribosomal protein uS3 family.</text>
</comment>
<feature type="chain" id="PRO_0000293807" description="Small ribosomal subunit protein uS3">
    <location>
        <begin position="1"/>
        <end position="220"/>
    </location>
</feature>
<feature type="domain" description="KH type-2" evidence="1">
    <location>
        <begin position="38"/>
        <end position="106"/>
    </location>
</feature>
<name>RS3_LACP3</name>
<evidence type="ECO:0000255" key="1">
    <source>
        <dbReference type="HAMAP-Rule" id="MF_01309"/>
    </source>
</evidence>
<evidence type="ECO:0000305" key="2"/>
<organism>
    <name type="scientific">Lacticaseibacillus paracasei (strain ATCC 334 / BCRC 17002 / CCUG 31169 / CIP 107868 / KCTC 3260 / NRRL B-441)</name>
    <name type="common">Lactobacillus paracasei</name>
    <dbReference type="NCBI Taxonomy" id="321967"/>
    <lineage>
        <taxon>Bacteria</taxon>
        <taxon>Bacillati</taxon>
        <taxon>Bacillota</taxon>
        <taxon>Bacilli</taxon>
        <taxon>Lactobacillales</taxon>
        <taxon>Lactobacillaceae</taxon>
        <taxon>Lacticaseibacillus</taxon>
    </lineage>
</organism>
<reference key="1">
    <citation type="journal article" date="2006" name="Proc. Natl. Acad. Sci. U.S.A.">
        <title>Comparative genomics of the lactic acid bacteria.</title>
        <authorList>
            <person name="Makarova K.S."/>
            <person name="Slesarev A."/>
            <person name="Wolf Y.I."/>
            <person name="Sorokin A."/>
            <person name="Mirkin B."/>
            <person name="Koonin E.V."/>
            <person name="Pavlov A."/>
            <person name="Pavlova N."/>
            <person name="Karamychev V."/>
            <person name="Polouchine N."/>
            <person name="Shakhova V."/>
            <person name="Grigoriev I."/>
            <person name="Lou Y."/>
            <person name="Rohksar D."/>
            <person name="Lucas S."/>
            <person name="Huang K."/>
            <person name="Goodstein D.M."/>
            <person name="Hawkins T."/>
            <person name="Plengvidhya V."/>
            <person name="Welker D."/>
            <person name="Hughes J."/>
            <person name="Goh Y."/>
            <person name="Benson A."/>
            <person name="Baldwin K."/>
            <person name="Lee J.-H."/>
            <person name="Diaz-Muniz I."/>
            <person name="Dosti B."/>
            <person name="Smeianov V."/>
            <person name="Wechter W."/>
            <person name="Barabote R."/>
            <person name="Lorca G."/>
            <person name="Altermann E."/>
            <person name="Barrangou R."/>
            <person name="Ganesan B."/>
            <person name="Xie Y."/>
            <person name="Rawsthorne H."/>
            <person name="Tamir D."/>
            <person name="Parker C."/>
            <person name="Breidt F."/>
            <person name="Broadbent J.R."/>
            <person name="Hutkins R."/>
            <person name="O'Sullivan D."/>
            <person name="Steele J."/>
            <person name="Unlu G."/>
            <person name="Saier M.H. Jr."/>
            <person name="Klaenhammer T."/>
            <person name="Richardson P."/>
            <person name="Kozyavkin S."/>
            <person name="Weimer B.C."/>
            <person name="Mills D.A."/>
        </authorList>
    </citation>
    <scope>NUCLEOTIDE SEQUENCE [LARGE SCALE GENOMIC DNA]</scope>
    <source>
        <strain>ATCC 334 / BCRC 17002 / CCUG 31169 / CIP 107868 / KCTC 3260 / NRRL B-441</strain>
    </source>
</reference>